<proteinExistence type="inferred from homology"/>
<organism>
    <name type="scientific">Prochlorococcus marinus (strain SARG / CCMP1375 / SS120)</name>
    <dbReference type="NCBI Taxonomy" id="167539"/>
    <lineage>
        <taxon>Bacteria</taxon>
        <taxon>Bacillati</taxon>
        <taxon>Cyanobacteriota</taxon>
        <taxon>Cyanophyceae</taxon>
        <taxon>Synechococcales</taxon>
        <taxon>Prochlorococcaceae</taxon>
        <taxon>Prochlorococcus</taxon>
    </lineage>
</organism>
<protein>
    <recommendedName>
        <fullName evidence="1">Putative pre-16S rRNA nuclease</fullName>
        <ecNumber evidence="1">3.1.-.-</ecNumber>
    </recommendedName>
</protein>
<name>YQGF_PROMA</name>
<accession>Q7VC75</accession>
<sequence>MVRPKPTSVLSFDYGHKRIGLAGCDPLGITVTALSPIHRISFQKDLTLIKSLCIEREIKGLIVGLPLDESGQNTVQSIHCQNYGIKIAKELDLPLAWVNEHSSSWDAGQKYNLQNDRTGKLDSAVAALLLEQWLREGPELQPVSKLDSPRIKF</sequence>
<evidence type="ECO:0000255" key="1">
    <source>
        <dbReference type="HAMAP-Rule" id="MF_00651"/>
    </source>
</evidence>
<dbReference type="EC" id="3.1.-.-" evidence="1"/>
<dbReference type="EMBL" id="AE017126">
    <property type="protein sequence ID" value="AAP99911.1"/>
    <property type="molecule type" value="Genomic_DNA"/>
</dbReference>
<dbReference type="RefSeq" id="NP_875259.1">
    <property type="nucleotide sequence ID" value="NC_005042.1"/>
</dbReference>
<dbReference type="SMR" id="Q7VC75"/>
<dbReference type="STRING" id="167539.Pro_0867"/>
<dbReference type="EnsemblBacteria" id="AAP99911">
    <property type="protein sequence ID" value="AAP99911"/>
    <property type="gene ID" value="Pro_0867"/>
</dbReference>
<dbReference type="KEGG" id="pma:Pro_0867"/>
<dbReference type="PATRIC" id="fig|167539.5.peg.916"/>
<dbReference type="eggNOG" id="COG0816">
    <property type="taxonomic scope" value="Bacteria"/>
</dbReference>
<dbReference type="HOGENOM" id="CLU_098240_3_1_3"/>
<dbReference type="OrthoDB" id="9796140at2"/>
<dbReference type="Proteomes" id="UP000001420">
    <property type="component" value="Chromosome"/>
</dbReference>
<dbReference type="GO" id="GO:0005829">
    <property type="term" value="C:cytosol"/>
    <property type="evidence" value="ECO:0007669"/>
    <property type="project" value="TreeGrafter"/>
</dbReference>
<dbReference type="GO" id="GO:0004518">
    <property type="term" value="F:nuclease activity"/>
    <property type="evidence" value="ECO:0007669"/>
    <property type="project" value="UniProtKB-KW"/>
</dbReference>
<dbReference type="GO" id="GO:0000967">
    <property type="term" value="P:rRNA 5'-end processing"/>
    <property type="evidence" value="ECO:0007669"/>
    <property type="project" value="UniProtKB-UniRule"/>
</dbReference>
<dbReference type="CDD" id="cd16964">
    <property type="entry name" value="YqgF"/>
    <property type="match status" value="1"/>
</dbReference>
<dbReference type="Gene3D" id="3.30.420.140">
    <property type="entry name" value="YqgF/RNase H-like domain"/>
    <property type="match status" value="1"/>
</dbReference>
<dbReference type="HAMAP" id="MF_00651">
    <property type="entry name" value="Nuclease_YqgF"/>
    <property type="match status" value="1"/>
</dbReference>
<dbReference type="InterPro" id="IPR012337">
    <property type="entry name" value="RNaseH-like_sf"/>
</dbReference>
<dbReference type="InterPro" id="IPR005227">
    <property type="entry name" value="YqgF"/>
</dbReference>
<dbReference type="InterPro" id="IPR006641">
    <property type="entry name" value="YqgF/RNaseH-like_dom"/>
</dbReference>
<dbReference type="InterPro" id="IPR037027">
    <property type="entry name" value="YqgF/RNaseH-like_dom_sf"/>
</dbReference>
<dbReference type="NCBIfam" id="TIGR00250">
    <property type="entry name" value="RNAse_H_YqgF"/>
    <property type="match status" value="1"/>
</dbReference>
<dbReference type="PANTHER" id="PTHR33317">
    <property type="entry name" value="POLYNUCLEOTIDYL TRANSFERASE, RIBONUCLEASE H-LIKE SUPERFAMILY PROTEIN"/>
    <property type="match status" value="1"/>
</dbReference>
<dbReference type="PANTHER" id="PTHR33317:SF4">
    <property type="entry name" value="POLYNUCLEOTIDYL TRANSFERASE, RIBONUCLEASE H-LIKE SUPERFAMILY PROTEIN"/>
    <property type="match status" value="1"/>
</dbReference>
<dbReference type="Pfam" id="PF03652">
    <property type="entry name" value="RuvX"/>
    <property type="match status" value="1"/>
</dbReference>
<dbReference type="SMART" id="SM00732">
    <property type="entry name" value="YqgFc"/>
    <property type="match status" value="1"/>
</dbReference>
<dbReference type="SUPFAM" id="SSF53098">
    <property type="entry name" value="Ribonuclease H-like"/>
    <property type="match status" value="1"/>
</dbReference>
<gene>
    <name type="ordered locus">Pro_0867</name>
</gene>
<reference key="1">
    <citation type="journal article" date="2003" name="Proc. Natl. Acad. Sci. U.S.A.">
        <title>Genome sequence of the cyanobacterium Prochlorococcus marinus SS120, a nearly minimal oxyphototrophic genome.</title>
        <authorList>
            <person name="Dufresne A."/>
            <person name="Salanoubat M."/>
            <person name="Partensky F."/>
            <person name="Artiguenave F."/>
            <person name="Axmann I.M."/>
            <person name="Barbe V."/>
            <person name="Duprat S."/>
            <person name="Galperin M.Y."/>
            <person name="Koonin E.V."/>
            <person name="Le Gall F."/>
            <person name="Makarova K.S."/>
            <person name="Ostrowski M."/>
            <person name="Oztas S."/>
            <person name="Robert C."/>
            <person name="Rogozin I.B."/>
            <person name="Scanlan D.J."/>
            <person name="Tandeau de Marsac N."/>
            <person name="Weissenbach J."/>
            <person name="Wincker P."/>
            <person name="Wolf Y.I."/>
            <person name="Hess W.R."/>
        </authorList>
    </citation>
    <scope>NUCLEOTIDE SEQUENCE [LARGE SCALE GENOMIC DNA]</scope>
    <source>
        <strain>SARG / CCMP1375 / SS120</strain>
    </source>
</reference>
<comment type="function">
    <text evidence="1">Could be a nuclease involved in processing of the 5'-end of pre-16S rRNA.</text>
</comment>
<comment type="subcellular location">
    <subcellularLocation>
        <location evidence="1">Cytoplasm</location>
    </subcellularLocation>
</comment>
<comment type="similarity">
    <text evidence="1">Belongs to the YqgF nuclease family.</text>
</comment>
<feature type="chain" id="PRO_0000172115" description="Putative pre-16S rRNA nuclease">
    <location>
        <begin position="1"/>
        <end position="153"/>
    </location>
</feature>
<keyword id="KW-0963">Cytoplasm</keyword>
<keyword id="KW-0378">Hydrolase</keyword>
<keyword id="KW-0540">Nuclease</keyword>
<keyword id="KW-1185">Reference proteome</keyword>
<keyword id="KW-0690">Ribosome biogenesis</keyword>